<feature type="chain" id="PRO_0000082612" description="Ubiquitin-fold modifier-conjugating enzyme 1">
    <location>
        <begin position="1"/>
        <end position="167"/>
    </location>
</feature>
<feature type="active site" description="Glycyl thioester intermediate" evidence="1">
    <location>
        <position position="116"/>
    </location>
</feature>
<feature type="cross-link" description="Glycyl lysine isopeptide (Lys-Gly) (interchain with G-Cter in UFM1)" evidence="1">
    <location>
        <position position="122"/>
    </location>
</feature>
<protein>
    <recommendedName>
        <fullName evidence="2">Ubiquitin-fold modifier-conjugating enzyme 1</fullName>
        <shortName evidence="1">Ufm1-conjugating enzyme 1</shortName>
    </recommendedName>
</protein>
<comment type="function">
    <text evidence="1">E2-like enzyme which specifically catalyzes the second step in ufmylation. Accepts the ubiquitin-like modifier UFM1 from the E1 enzyme UBA5 and forms an intermediate with UFM1 via a thioester linkage. Ufmylation is involved in various processes, such as ribosome recycling, response to DNA damage, interferon response or reticulophagy (also called ER-phagy).</text>
</comment>
<comment type="subunit">
    <text evidence="1">Interacts with UBA5 (via C-terminus). Interacts with UFL1. Interacts with UFM1. Interacts with KIRREL3.</text>
</comment>
<comment type="domain">
    <text evidence="1">In absence of UBA5, the active site is solvated by water molecules thereby reducing its nucleophilic activity. A linker region of UBA5 is required to reduce the amount of water molecules in the vicinity of the active site and elevate its nucleophilic activity.</text>
</comment>
<comment type="PTM">
    <text evidence="1">Ufmylated at Lys-122. Deufmylated by UFSP1.</text>
</comment>
<comment type="similarity">
    <text evidence="2">Belongs to the ubiquitin-conjugating enzyme family. UFC1 subfamily.</text>
</comment>
<sequence>MADEATRRVVSEIPVLKTNAGPRDRELWVQRLKEEYQSLIRYVENNKNADNDWFRLESNKEGTRWFGKCWYIHDLLKYEFDIEFDIPITYPTTAPEIAVPELDGKTAKMYRGGKICLTDHFKPLWARNVPKFGLAHLMALGLGPWLAVEIPDLIQKGVIQHKEKCSQ</sequence>
<accession>Q5E953</accession>
<accession>Q3SZ50</accession>
<reference key="1">
    <citation type="journal article" date="2005" name="BMC Genomics">
        <title>Characterization of 954 bovine full-CDS cDNA sequences.</title>
        <authorList>
            <person name="Harhay G.P."/>
            <person name="Sonstegard T.S."/>
            <person name="Keele J.W."/>
            <person name="Heaton M.P."/>
            <person name="Clawson M.L."/>
            <person name="Snelling W.M."/>
            <person name="Wiedmann R.T."/>
            <person name="Van Tassell C.P."/>
            <person name="Smith T.P.L."/>
        </authorList>
    </citation>
    <scope>NUCLEOTIDE SEQUENCE [LARGE SCALE MRNA]</scope>
</reference>
<reference key="2">
    <citation type="submission" date="2005-08" db="EMBL/GenBank/DDBJ databases">
        <authorList>
            <consortium name="NIH - Mammalian Gene Collection (MGC) project"/>
        </authorList>
    </citation>
    <scope>NUCLEOTIDE SEQUENCE [LARGE SCALE MRNA]</scope>
    <source>
        <strain>Hereford</strain>
        <tissue>Hypothalamus</tissue>
    </source>
</reference>
<evidence type="ECO:0000250" key="1">
    <source>
        <dbReference type="UniProtKB" id="Q9Y3C8"/>
    </source>
</evidence>
<evidence type="ECO:0000305" key="2"/>
<keyword id="KW-1017">Isopeptide bond</keyword>
<keyword id="KW-1185">Reference proteome</keyword>
<keyword id="KW-0832">Ubl conjugation</keyword>
<keyword id="KW-0833">Ubl conjugation pathway</keyword>
<gene>
    <name evidence="1" type="primary">UFC1</name>
</gene>
<name>UFC1_BOVIN</name>
<organism>
    <name type="scientific">Bos taurus</name>
    <name type="common">Bovine</name>
    <dbReference type="NCBI Taxonomy" id="9913"/>
    <lineage>
        <taxon>Eukaryota</taxon>
        <taxon>Metazoa</taxon>
        <taxon>Chordata</taxon>
        <taxon>Craniata</taxon>
        <taxon>Vertebrata</taxon>
        <taxon>Euteleostomi</taxon>
        <taxon>Mammalia</taxon>
        <taxon>Eutheria</taxon>
        <taxon>Laurasiatheria</taxon>
        <taxon>Artiodactyla</taxon>
        <taxon>Ruminantia</taxon>
        <taxon>Pecora</taxon>
        <taxon>Bovidae</taxon>
        <taxon>Bovinae</taxon>
        <taxon>Bos</taxon>
    </lineage>
</organism>
<proteinExistence type="evidence at transcript level"/>
<dbReference type="EMBL" id="BT021067">
    <property type="protein sequence ID" value="AAX09084.1"/>
    <property type="molecule type" value="mRNA"/>
</dbReference>
<dbReference type="EMBL" id="BC103142">
    <property type="protein sequence ID" value="AAI03143.1"/>
    <property type="molecule type" value="mRNA"/>
</dbReference>
<dbReference type="RefSeq" id="NP_001015663.1">
    <property type="nucleotide sequence ID" value="NM_001015663.1"/>
</dbReference>
<dbReference type="RefSeq" id="XP_005203588.1">
    <property type="nucleotide sequence ID" value="XM_005203531.5"/>
</dbReference>
<dbReference type="RefSeq" id="XP_010801073.1">
    <property type="nucleotide sequence ID" value="XM_010802771.3"/>
</dbReference>
<dbReference type="RefSeq" id="XP_059740734.1">
    <property type="nucleotide sequence ID" value="XM_059884751.1"/>
</dbReference>
<dbReference type="RefSeq" id="XP_059740735.1">
    <property type="nucleotide sequence ID" value="XM_059884752.1"/>
</dbReference>
<dbReference type="BMRB" id="Q5E953"/>
<dbReference type="SMR" id="Q5E953"/>
<dbReference type="FunCoup" id="Q5E953">
    <property type="interactions" value="2944"/>
</dbReference>
<dbReference type="STRING" id="9913.ENSBTAP00000058818"/>
<dbReference type="PaxDb" id="9913-ENSBTAP00000028928"/>
<dbReference type="DNASU" id="537221"/>
<dbReference type="GeneID" id="537221"/>
<dbReference type="KEGG" id="bta:537221"/>
<dbReference type="CTD" id="51506"/>
<dbReference type="VEuPathDB" id="HostDB:ENSBTAG00000021705"/>
<dbReference type="eggNOG" id="KOG3357">
    <property type="taxonomic scope" value="Eukaryota"/>
</dbReference>
<dbReference type="HOGENOM" id="CLU_101170_0_0_1"/>
<dbReference type="InParanoid" id="Q5E953"/>
<dbReference type="OMA" id="LWQKNVP"/>
<dbReference type="OrthoDB" id="10256182at2759"/>
<dbReference type="TreeFam" id="TF313587"/>
<dbReference type="Proteomes" id="UP000009136">
    <property type="component" value="Chromosome 3"/>
</dbReference>
<dbReference type="Bgee" id="ENSBTAG00000021705">
    <property type="expression patterns" value="Expressed in thyroid gland and 106 other cell types or tissues"/>
</dbReference>
<dbReference type="GO" id="GO:0061657">
    <property type="term" value="F:UFM1 conjugating enzyme activity"/>
    <property type="evidence" value="ECO:0000250"/>
    <property type="project" value="UniProtKB"/>
</dbReference>
<dbReference type="GO" id="GO:0071568">
    <property type="term" value="F:UFM1 transferase activity"/>
    <property type="evidence" value="ECO:0000318"/>
    <property type="project" value="GO_Central"/>
</dbReference>
<dbReference type="GO" id="GO:0007420">
    <property type="term" value="P:brain development"/>
    <property type="evidence" value="ECO:0000250"/>
    <property type="project" value="UniProtKB"/>
</dbReference>
<dbReference type="GO" id="GO:1990592">
    <property type="term" value="P:protein K69-linked ufmylation"/>
    <property type="evidence" value="ECO:0000250"/>
    <property type="project" value="UniProtKB"/>
</dbReference>
<dbReference type="GO" id="GO:0071569">
    <property type="term" value="P:protein ufmylation"/>
    <property type="evidence" value="ECO:0000250"/>
    <property type="project" value="UniProtKB"/>
</dbReference>
<dbReference type="GO" id="GO:0032649">
    <property type="term" value="P:regulation of type II interferon production"/>
    <property type="evidence" value="ECO:0000250"/>
    <property type="project" value="UniProtKB"/>
</dbReference>
<dbReference type="GO" id="GO:0034976">
    <property type="term" value="P:response to endoplasmic reticulum stress"/>
    <property type="evidence" value="ECO:0000250"/>
    <property type="project" value="UniProtKB"/>
</dbReference>
<dbReference type="GO" id="GO:0061709">
    <property type="term" value="P:reticulophagy"/>
    <property type="evidence" value="ECO:0000250"/>
    <property type="project" value="UniProtKB"/>
</dbReference>
<dbReference type="CDD" id="cd11686">
    <property type="entry name" value="UBCc_UFC1"/>
    <property type="match status" value="1"/>
</dbReference>
<dbReference type="FunFam" id="3.10.110.10:FF:000042">
    <property type="entry name" value="Ubiquitin-fold modifier-conjugating enzyme 1"/>
    <property type="match status" value="1"/>
</dbReference>
<dbReference type="Gene3D" id="3.10.110.10">
    <property type="entry name" value="Ubiquitin Conjugating Enzyme"/>
    <property type="match status" value="1"/>
</dbReference>
<dbReference type="InterPro" id="IPR016135">
    <property type="entry name" value="UBQ-conjugating_enzyme/RWD"/>
</dbReference>
<dbReference type="InterPro" id="IPR014806">
    <property type="entry name" value="Ufc1"/>
</dbReference>
<dbReference type="PANTHER" id="PTHR12921">
    <property type="entry name" value="UBIQUITIN-FOLD MODIFIER-CONJUGATING ENZYME 1"/>
    <property type="match status" value="1"/>
</dbReference>
<dbReference type="PANTHER" id="PTHR12921:SF0">
    <property type="entry name" value="UBIQUITIN-FOLD MODIFIER-CONJUGATING ENZYME 1"/>
    <property type="match status" value="1"/>
</dbReference>
<dbReference type="Pfam" id="PF08694">
    <property type="entry name" value="UFC1"/>
    <property type="match status" value="1"/>
</dbReference>
<dbReference type="PIRSF" id="PIRSF008716">
    <property type="entry name" value="DUF1782"/>
    <property type="match status" value="1"/>
</dbReference>
<dbReference type="SUPFAM" id="SSF54495">
    <property type="entry name" value="UBC-like"/>
    <property type="match status" value="1"/>
</dbReference>